<proteinExistence type="inferred from homology"/>
<organism>
    <name type="scientific">Pseudomonas fluorescens (strain SBW25)</name>
    <dbReference type="NCBI Taxonomy" id="216595"/>
    <lineage>
        <taxon>Bacteria</taxon>
        <taxon>Pseudomonadati</taxon>
        <taxon>Pseudomonadota</taxon>
        <taxon>Gammaproteobacteria</taxon>
        <taxon>Pseudomonadales</taxon>
        <taxon>Pseudomonadaceae</taxon>
        <taxon>Pseudomonas</taxon>
    </lineage>
</organism>
<dbReference type="EC" id="4.2.1.49" evidence="1"/>
<dbReference type="EMBL" id="AM181176">
    <property type="protein sequence ID" value="CAY46638.1"/>
    <property type="molecule type" value="Genomic_DNA"/>
</dbReference>
<dbReference type="SMR" id="C3K803"/>
<dbReference type="STRING" id="294.SRM1_00412"/>
<dbReference type="eggNOG" id="COG2987">
    <property type="taxonomic scope" value="Bacteria"/>
</dbReference>
<dbReference type="HOGENOM" id="CLU_018868_0_1_6"/>
<dbReference type="UniPathway" id="UPA00379">
    <property type="reaction ID" value="UER00550"/>
</dbReference>
<dbReference type="GO" id="GO:0005737">
    <property type="term" value="C:cytoplasm"/>
    <property type="evidence" value="ECO:0007669"/>
    <property type="project" value="UniProtKB-SubCell"/>
</dbReference>
<dbReference type="GO" id="GO:0016153">
    <property type="term" value="F:urocanate hydratase activity"/>
    <property type="evidence" value="ECO:0007669"/>
    <property type="project" value="UniProtKB-UniRule"/>
</dbReference>
<dbReference type="GO" id="GO:0019556">
    <property type="term" value="P:L-histidine catabolic process to glutamate and formamide"/>
    <property type="evidence" value="ECO:0007669"/>
    <property type="project" value="UniProtKB-UniPathway"/>
</dbReference>
<dbReference type="GO" id="GO:0019557">
    <property type="term" value="P:L-histidine catabolic process to glutamate and formate"/>
    <property type="evidence" value="ECO:0007669"/>
    <property type="project" value="UniProtKB-UniPathway"/>
</dbReference>
<dbReference type="FunFam" id="3.40.50.10730:FF:000001">
    <property type="entry name" value="Urocanate hydratase"/>
    <property type="match status" value="1"/>
</dbReference>
<dbReference type="Gene3D" id="3.40.50.10730">
    <property type="entry name" value="Urocanase like domains"/>
    <property type="match status" value="1"/>
</dbReference>
<dbReference type="Gene3D" id="3.40.1770.10">
    <property type="entry name" value="Urocanase superfamily"/>
    <property type="match status" value="1"/>
</dbReference>
<dbReference type="HAMAP" id="MF_00577">
    <property type="entry name" value="HutU"/>
    <property type="match status" value="1"/>
</dbReference>
<dbReference type="InterPro" id="IPR055351">
    <property type="entry name" value="Urocanase"/>
</dbReference>
<dbReference type="InterPro" id="IPR023637">
    <property type="entry name" value="Urocanase-like"/>
</dbReference>
<dbReference type="InterPro" id="IPR035401">
    <property type="entry name" value="Urocanase_C"/>
</dbReference>
<dbReference type="InterPro" id="IPR038364">
    <property type="entry name" value="Urocanase_central_sf"/>
</dbReference>
<dbReference type="InterPro" id="IPR023636">
    <property type="entry name" value="Urocanase_CS"/>
</dbReference>
<dbReference type="InterPro" id="IPR035400">
    <property type="entry name" value="Urocanase_N"/>
</dbReference>
<dbReference type="InterPro" id="IPR035085">
    <property type="entry name" value="Urocanase_Rossmann-like"/>
</dbReference>
<dbReference type="InterPro" id="IPR036190">
    <property type="entry name" value="Urocanase_sf"/>
</dbReference>
<dbReference type="NCBIfam" id="TIGR01228">
    <property type="entry name" value="hutU"/>
    <property type="match status" value="1"/>
</dbReference>
<dbReference type="NCBIfam" id="NF003820">
    <property type="entry name" value="PRK05414.1"/>
    <property type="match status" value="1"/>
</dbReference>
<dbReference type="PANTHER" id="PTHR12216">
    <property type="entry name" value="UROCANATE HYDRATASE"/>
    <property type="match status" value="1"/>
</dbReference>
<dbReference type="PANTHER" id="PTHR12216:SF4">
    <property type="entry name" value="UROCANATE HYDRATASE"/>
    <property type="match status" value="1"/>
</dbReference>
<dbReference type="Pfam" id="PF01175">
    <property type="entry name" value="Urocanase"/>
    <property type="match status" value="1"/>
</dbReference>
<dbReference type="Pfam" id="PF17392">
    <property type="entry name" value="Urocanase_C"/>
    <property type="match status" value="1"/>
</dbReference>
<dbReference type="Pfam" id="PF17391">
    <property type="entry name" value="Urocanase_N"/>
    <property type="match status" value="1"/>
</dbReference>
<dbReference type="PIRSF" id="PIRSF001423">
    <property type="entry name" value="Urocanate_hydrat"/>
    <property type="match status" value="1"/>
</dbReference>
<dbReference type="SUPFAM" id="SSF111326">
    <property type="entry name" value="Urocanase"/>
    <property type="match status" value="1"/>
</dbReference>
<dbReference type="PROSITE" id="PS01233">
    <property type="entry name" value="UROCANASE"/>
    <property type="match status" value="1"/>
</dbReference>
<sequence length="556" mass="60702">MTKPTKYRDVEIRAAHGNKLTAKSWLTEAPLRMLMNNLDPQVAENPKELVVYGGIGRAARNWECYDQIVESLTHLNDDETLLVQSGKPVGVFKTHSNAPRVLIANSNLVPHWASWEHFNELDAKGLAMYGQMTAGSWIYIGSQGIVQGTYETFVEAGRQHYDSNLKGRWVLTAGLGGMGGAQPLAATLAGACSLNIECQQVSIDFRLNSRYVDEQATDLDDALARIAKYTQEGKAISIALLGNAAEILPELVKRGVRPDMVTDQTSAHDPLNGYLPAGWTWDEYRARAKTEPAAVIKAAKQSMAVHVKAMLAFQKQGIPTFDYGNNIRQMAQEEGVENAFDFPGFVPAYIRPLFCRGVGPFRWAALSGDPQDIYKTDAKVKELIPDDAHLHNWLDMARERISFQGLPARICWVGLGQRAKLGLAFNEMVRSGELSAPVVIGRDHLDSGSVASPNRETEAMQDGSDAVSDWPLLNALLNTASGATWVSLHHGGGVGMGFSQHSGMVIVCDGTDEAAERIARVLHNDPATGVMRHADAGYQIAIDCAKEQGLNLPMIK</sequence>
<protein>
    <recommendedName>
        <fullName evidence="1">Urocanate hydratase</fullName>
        <shortName evidence="1">Urocanase</shortName>
        <ecNumber evidence="1">4.2.1.49</ecNumber>
    </recommendedName>
    <alternativeName>
        <fullName evidence="1">Imidazolonepropionate hydrolase</fullName>
    </alternativeName>
</protein>
<gene>
    <name evidence="1" type="primary">hutU</name>
    <name type="ordered locus">PFLU_0361</name>
</gene>
<name>HUTU_PSEFS</name>
<keyword id="KW-0963">Cytoplasm</keyword>
<keyword id="KW-0369">Histidine metabolism</keyword>
<keyword id="KW-0456">Lyase</keyword>
<keyword id="KW-0520">NAD</keyword>
<reference key="1">
    <citation type="journal article" date="2009" name="Genome Biol.">
        <title>Genomic and genetic analyses of diversity and plant interactions of Pseudomonas fluorescens.</title>
        <authorList>
            <person name="Silby M.W."/>
            <person name="Cerdeno-Tarraga A.M."/>
            <person name="Vernikos G.S."/>
            <person name="Giddens S.R."/>
            <person name="Jackson R.W."/>
            <person name="Preston G.M."/>
            <person name="Zhang X.-X."/>
            <person name="Moon C.D."/>
            <person name="Gehrig S.M."/>
            <person name="Godfrey S.A.C."/>
            <person name="Knight C.G."/>
            <person name="Malone J.G."/>
            <person name="Robinson Z."/>
            <person name="Spiers A.J."/>
            <person name="Harris S."/>
            <person name="Challis G.L."/>
            <person name="Yaxley A.M."/>
            <person name="Harris D."/>
            <person name="Seeger K."/>
            <person name="Murphy L."/>
            <person name="Rutter S."/>
            <person name="Squares R."/>
            <person name="Quail M.A."/>
            <person name="Saunders E."/>
            <person name="Mavromatis K."/>
            <person name="Brettin T.S."/>
            <person name="Bentley S.D."/>
            <person name="Hothersall J."/>
            <person name="Stephens E."/>
            <person name="Thomas C.M."/>
            <person name="Parkhill J."/>
            <person name="Levy S.B."/>
            <person name="Rainey P.B."/>
            <person name="Thomson N.R."/>
        </authorList>
    </citation>
    <scope>NUCLEOTIDE SEQUENCE [LARGE SCALE GENOMIC DNA]</scope>
    <source>
        <strain>SBW25</strain>
    </source>
</reference>
<accession>C3K803</accession>
<feature type="chain" id="PRO_1000212101" description="Urocanate hydratase">
    <location>
        <begin position="1"/>
        <end position="556"/>
    </location>
</feature>
<feature type="active site" evidence="1">
    <location>
        <position position="411"/>
    </location>
</feature>
<feature type="binding site" evidence="1">
    <location>
        <begin position="53"/>
        <end position="54"/>
    </location>
    <ligand>
        <name>NAD(+)</name>
        <dbReference type="ChEBI" id="CHEBI:57540"/>
    </ligand>
</feature>
<feature type="binding site" evidence="1">
    <location>
        <position position="131"/>
    </location>
    <ligand>
        <name>NAD(+)</name>
        <dbReference type="ChEBI" id="CHEBI:57540"/>
    </ligand>
</feature>
<feature type="binding site" evidence="1">
    <location>
        <begin position="177"/>
        <end position="179"/>
    </location>
    <ligand>
        <name>NAD(+)</name>
        <dbReference type="ChEBI" id="CHEBI:57540"/>
    </ligand>
</feature>
<feature type="binding site" evidence="1">
    <location>
        <position position="197"/>
    </location>
    <ligand>
        <name>NAD(+)</name>
        <dbReference type="ChEBI" id="CHEBI:57540"/>
    </ligand>
</feature>
<feature type="binding site" evidence="1">
    <location>
        <begin position="243"/>
        <end position="244"/>
    </location>
    <ligand>
        <name>NAD(+)</name>
        <dbReference type="ChEBI" id="CHEBI:57540"/>
    </ligand>
</feature>
<feature type="binding site" evidence="1">
    <location>
        <begin position="264"/>
        <end position="268"/>
    </location>
    <ligand>
        <name>NAD(+)</name>
        <dbReference type="ChEBI" id="CHEBI:57540"/>
    </ligand>
</feature>
<feature type="binding site" evidence="1">
    <location>
        <begin position="274"/>
        <end position="275"/>
    </location>
    <ligand>
        <name>NAD(+)</name>
        <dbReference type="ChEBI" id="CHEBI:57540"/>
    </ligand>
</feature>
<feature type="binding site" evidence="1">
    <location>
        <position position="323"/>
    </location>
    <ligand>
        <name>NAD(+)</name>
        <dbReference type="ChEBI" id="CHEBI:57540"/>
    </ligand>
</feature>
<feature type="binding site" evidence="1">
    <location>
        <position position="493"/>
    </location>
    <ligand>
        <name>NAD(+)</name>
        <dbReference type="ChEBI" id="CHEBI:57540"/>
    </ligand>
</feature>
<evidence type="ECO:0000255" key="1">
    <source>
        <dbReference type="HAMAP-Rule" id="MF_00577"/>
    </source>
</evidence>
<comment type="function">
    <text evidence="1">Catalyzes the conversion of urocanate to 4-imidazolone-5-propionate.</text>
</comment>
<comment type="catalytic activity">
    <reaction evidence="1">
        <text>4-imidazolone-5-propanoate = trans-urocanate + H2O</text>
        <dbReference type="Rhea" id="RHEA:13101"/>
        <dbReference type="ChEBI" id="CHEBI:15377"/>
        <dbReference type="ChEBI" id="CHEBI:17771"/>
        <dbReference type="ChEBI" id="CHEBI:77893"/>
        <dbReference type="EC" id="4.2.1.49"/>
    </reaction>
</comment>
<comment type="cofactor">
    <cofactor evidence="1">
        <name>NAD(+)</name>
        <dbReference type="ChEBI" id="CHEBI:57540"/>
    </cofactor>
    <text evidence="1">Binds 1 NAD(+) per subunit.</text>
</comment>
<comment type="pathway">
    <text evidence="1">Amino-acid degradation; L-histidine degradation into L-glutamate; N-formimidoyl-L-glutamate from L-histidine: step 2/3.</text>
</comment>
<comment type="subcellular location">
    <subcellularLocation>
        <location evidence="1">Cytoplasm</location>
    </subcellularLocation>
</comment>
<comment type="similarity">
    <text evidence="1">Belongs to the urocanase family.</text>
</comment>